<sequence>MKKHGVLNSEIASILASLGHTDTIVIADCGLPIPDGVKRIDLAVEIGKPSFLDVLQVVADDMAIEKVTLAEEVINNNAEINKEIELKLVEPALEYVSHEQFKEHTKKAKAIIRTGEATPYANVILHAGVIF</sequence>
<accession>Q73DH8</accession>
<dbReference type="EC" id="5.4.99.62" evidence="1"/>
<dbReference type="EMBL" id="AE017194">
    <property type="protein sequence ID" value="AAS39667.1"/>
    <property type="molecule type" value="Genomic_DNA"/>
</dbReference>
<dbReference type="SMR" id="Q73DH8"/>
<dbReference type="KEGG" id="bca:BCE_0734"/>
<dbReference type="HOGENOM" id="CLU_135498_0_0_9"/>
<dbReference type="UniPathway" id="UPA00916">
    <property type="reaction ID" value="UER00888"/>
</dbReference>
<dbReference type="Proteomes" id="UP000002527">
    <property type="component" value="Chromosome"/>
</dbReference>
<dbReference type="GO" id="GO:0005829">
    <property type="term" value="C:cytosol"/>
    <property type="evidence" value="ECO:0007669"/>
    <property type="project" value="TreeGrafter"/>
</dbReference>
<dbReference type="GO" id="GO:0062193">
    <property type="term" value="F:D-ribose pyranase activity"/>
    <property type="evidence" value="ECO:0007669"/>
    <property type="project" value="UniProtKB-EC"/>
</dbReference>
<dbReference type="GO" id="GO:0016872">
    <property type="term" value="F:intramolecular lyase activity"/>
    <property type="evidence" value="ECO:0007669"/>
    <property type="project" value="UniProtKB-UniRule"/>
</dbReference>
<dbReference type="GO" id="GO:0048029">
    <property type="term" value="F:monosaccharide binding"/>
    <property type="evidence" value="ECO:0007669"/>
    <property type="project" value="InterPro"/>
</dbReference>
<dbReference type="GO" id="GO:0019303">
    <property type="term" value="P:D-ribose catabolic process"/>
    <property type="evidence" value="ECO:0007669"/>
    <property type="project" value="UniProtKB-UniRule"/>
</dbReference>
<dbReference type="FunFam" id="3.40.1650.10:FF:000003">
    <property type="entry name" value="D-ribose pyranase"/>
    <property type="match status" value="1"/>
</dbReference>
<dbReference type="Gene3D" id="3.40.1650.10">
    <property type="entry name" value="RbsD-like domain"/>
    <property type="match status" value="1"/>
</dbReference>
<dbReference type="HAMAP" id="MF_01661">
    <property type="entry name" value="D_rib_pyranase"/>
    <property type="match status" value="1"/>
</dbReference>
<dbReference type="InterPro" id="IPR023064">
    <property type="entry name" value="D-ribose_pyranase"/>
</dbReference>
<dbReference type="InterPro" id="IPR023750">
    <property type="entry name" value="RbsD-like_sf"/>
</dbReference>
<dbReference type="InterPro" id="IPR007721">
    <property type="entry name" value="RbsD_FucU"/>
</dbReference>
<dbReference type="NCBIfam" id="NF008761">
    <property type="entry name" value="PRK11797.1"/>
    <property type="match status" value="1"/>
</dbReference>
<dbReference type="PANTHER" id="PTHR37831">
    <property type="entry name" value="D-RIBOSE PYRANASE"/>
    <property type="match status" value="1"/>
</dbReference>
<dbReference type="PANTHER" id="PTHR37831:SF1">
    <property type="entry name" value="D-RIBOSE PYRANASE"/>
    <property type="match status" value="1"/>
</dbReference>
<dbReference type="Pfam" id="PF05025">
    <property type="entry name" value="RbsD_FucU"/>
    <property type="match status" value="1"/>
</dbReference>
<dbReference type="SUPFAM" id="SSF102546">
    <property type="entry name" value="RbsD-like"/>
    <property type="match status" value="1"/>
</dbReference>
<feature type="chain" id="PRO_0000346171" description="D-ribose pyranase">
    <location>
        <begin position="1"/>
        <end position="131"/>
    </location>
</feature>
<feature type="active site" description="Proton donor" evidence="1">
    <location>
        <position position="20"/>
    </location>
</feature>
<feature type="binding site" evidence="1">
    <location>
        <position position="28"/>
    </location>
    <ligand>
        <name>substrate</name>
    </ligand>
</feature>
<feature type="binding site" evidence="1">
    <location>
        <position position="98"/>
    </location>
    <ligand>
        <name>substrate</name>
    </ligand>
</feature>
<feature type="binding site" evidence="1">
    <location>
        <begin position="120"/>
        <end position="122"/>
    </location>
    <ligand>
        <name>substrate</name>
    </ligand>
</feature>
<reference key="1">
    <citation type="journal article" date="2004" name="Nucleic Acids Res.">
        <title>The genome sequence of Bacillus cereus ATCC 10987 reveals metabolic adaptations and a large plasmid related to Bacillus anthracis pXO1.</title>
        <authorList>
            <person name="Rasko D.A."/>
            <person name="Ravel J."/>
            <person name="Oekstad O.A."/>
            <person name="Helgason E."/>
            <person name="Cer R.Z."/>
            <person name="Jiang L."/>
            <person name="Shores K.A."/>
            <person name="Fouts D.E."/>
            <person name="Tourasse N.J."/>
            <person name="Angiuoli S.V."/>
            <person name="Kolonay J.F."/>
            <person name="Nelson W.C."/>
            <person name="Kolstoe A.-B."/>
            <person name="Fraser C.M."/>
            <person name="Read T.D."/>
        </authorList>
    </citation>
    <scope>NUCLEOTIDE SEQUENCE [LARGE SCALE GENOMIC DNA]</scope>
    <source>
        <strain>ATCC 10987 / NRS 248</strain>
    </source>
</reference>
<evidence type="ECO:0000255" key="1">
    <source>
        <dbReference type="HAMAP-Rule" id="MF_01661"/>
    </source>
</evidence>
<organism>
    <name type="scientific">Bacillus cereus (strain ATCC 10987 / NRS 248)</name>
    <dbReference type="NCBI Taxonomy" id="222523"/>
    <lineage>
        <taxon>Bacteria</taxon>
        <taxon>Bacillati</taxon>
        <taxon>Bacillota</taxon>
        <taxon>Bacilli</taxon>
        <taxon>Bacillales</taxon>
        <taxon>Bacillaceae</taxon>
        <taxon>Bacillus</taxon>
        <taxon>Bacillus cereus group</taxon>
    </lineage>
</organism>
<protein>
    <recommendedName>
        <fullName evidence="1">D-ribose pyranase</fullName>
        <ecNumber evidence="1">5.4.99.62</ecNumber>
    </recommendedName>
</protein>
<proteinExistence type="inferred from homology"/>
<name>RBSD_BACC1</name>
<keyword id="KW-0119">Carbohydrate metabolism</keyword>
<keyword id="KW-0963">Cytoplasm</keyword>
<keyword id="KW-0413">Isomerase</keyword>
<gene>
    <name evidence="1" type="primary">rbsD</name>
    <name type="ordered locus">BCE_0734</name>
</gene>
<comment type="function">
    <text evidence="1">Catalyzes the interconversion of beta-pyran and beta-furan forms of D-ribose.</text>
</comment>
<comment type="catalytic activity">
    <reaction evidence="1">
        <text>beta-D-ribopyranose = beta-D-ribofuranose</text>
        <dbReference type="Rhea" id="RHEA:25432"/>
        <dbReference type="ChEBI" id="CHEBI:27476"/>
        <dbReference type="ChEBI" id="CHEBI:47002"/>
        <dbReference type="EC" id="5.4.99.62"/>
    </reaction>
</comment>
<comment type="pathway">
    <text evidence="1">Carbohydrate metabolism; D-ribose degradation; D-ribose 5-phosphate from beta-D-ribopyranose: step 1/2.</text>
</comment>
<comment type="subunit">
    <text evidence="1">Homodecamer.</text>
</comment>
<comment type="subcellular location">
    <subcellularLocation>
        <location evidence="1">Cytoplasm</location>
    </subcellularLocation>
</comment>
<comment type="similarity">
    <text evidence="1">Belongs to the RbsD / FucU family. RbsD subfamily.</text>
</comment>